<organism>
    <name type="scientific">Bacillus subtilis</name>
    <dbReference type="NCBI Taxonomy" id="1423"/>
    <lineage>
        <taxon>Bacteria</taxon>
        <taxon>Bacillati</taxon>
        <taxon>Bacillota</taxon>
        <taxon>Bacilli</taxon>
        <taxon>Bacillales</taxon>
        <taxon>Bacillaceae</taxon>
        <taxon>Bacillus</taxon>
    </lineage>
</organism>
<gene>
    <name type="primary">lyzB</name>
</gene>
<name>LYB_BACIU</name>
<sequence length="117" mass="12732">ISPLGSVTKKNQDSTAYNWTGNKTANGNWPVLGICAVHRKKDIGGSGNSPVIPFGTTLKTDKDIWLPDGVGYKSSFNVDDTGSGPKKTDYWIDIYYSKDTKAAINYGVVKLSYTYST</sequence>
<protein>
    <recommendedName>
        <fullName>B-enzyme</fullName>
    </recommendedName>
    <alternativeName>
        <fullName>Lysozyme</fullName>
        <ecNumber>3.2.1.17</ecNumber>
    </alternativeName>
</protein>
<feature type="chain" id="PRO_0000057725" description="B-enzyme">
    <location>
        <begin position="1"/>
        <end position="117"/>
    </location>
</feature>
<feature type="active site" evidence="1">
    <location>
        <position position="89"/>
    </location>
</feature>
<dbReference type="EC" id="3.2.1.17"/>
<dbReference type="PIR" id="JX0053">
    <property type="entry name" value="JX0053"/>
</dbReference>
<dbReference type="GO" id="GO:0003796">
    <property type="term" value="F:lysozyme activity"/>
    <property type="evidence" value="ECO:0007669"/>
    <property type="project" value="UniProtKB-EC"/>
</dbReference>
<dbReference type="GO" id="GO:0042742">
    <property type="term" value="P:defense response to bacterium"/>
    <property type="evidence" value="ECO:0007669"/>
    <property type="project" value="UniProtKB-KW"/>
</dbReference>
<dbReference type="GO" id="GO:0031640">
    <property type="term" value="P:killing of cells of another organism"/>
    <property type="evidence" value="ECO:0007669"/>
    <property type="project" value="UniProtKB-KW"/>
</dbReference>
<evidence type="ECO:0000255" key="1"/>
<proteinExistence type="evidence at protein level"/>
<keyword id="KW-0929">Antimicrobial</keyword>
<keyword id="KW-0081">Bacteriolytic enzyme</keyword>
<keyword id="KW-0903">Direct protein sequencing</keyword>
<keyword id="KW-0326">Glycosidase</keyword>
<keyword id="KW-0378">Hydrolase</keyword>
<comment type="catalytic activity">
    <reaction>
        <text>Hydrolysis of (1-&gt;4)-beta-linkages between N-acetylmuramic acid and N-acetyl-D-glucosamine residues in a peptidoglycan and between N-acetyl-D-glucosamine residues in chitodextrins.</text>
        <dbReference type="EC" id="3.2.1.17"/>
    </reaction>
</comment>
<comment type="miscellaneous">
    <text>Usually lysozymes have a catalytic site with Asp and Glu, but B-enzyme has no Glu (two Asp for catalytic site).</text>
</comment>
<reference key="1">
    <citation type="journal article" date="1988" name="J. Biochem.">
        <title>Amino acid sequence of a lysozyme (B-enzyme) from Bacillus subtilis YT-25.</title>
        <authorList>
            <person name="Kamei K."/>
            <person name="Hara S."/>
            <person name="Ikenaka T."/>
            <person name="Murao S."/>
        </authorList>
    </citation>
    <scope>PROTEIN SEQUENCE</scope>
    <source>
        <strain>YT-25</strain>
    </source>
</reference>
<accession>P10773</accession>